<name>RL7_HALH5</name>
<keyword id="KW-1185">Reference proteome</keyword>
<keyword id="KW-0687">Ribonucleoprotein</keyword>
<keyword id="KW-0689">Ribosomal protein</keyword>
<comment type="function">
    <text evidence="1">Forms part of the ribosomal stalk which helps the ribosome interact with GTP-bound translation factors. Is thus essential for accurate translation.</text>
</comment>
<comment type="subunit">
    <text evidence="1">Homodimer. Part of the ribosomal stalk of the 50S ribosomal subunit. Forms a multimeric L10(L12)X complex, where L10 forms an elongated spine to which 2 to 4 L12 dimers bind in a sequential fashion. Binds GTP-bound translation factors.</text>
</comment>
<comment type="similarity">
    <text evidence="1">Belongs to the bacterial ribosomal protein bL12 family.</text>
</comment>
<gene>
    <name evidence="1" type="primary">rplL</name>
    <name type="ordered locus">BH0122</name>
</gene>
<sequence>MSKDQIIEAIKEMTVLELNDLVKAIEEEFGVTAAAPVAVAGGAAAEGGAAEKTEFDVVLESAGGSKINVIKVVREITGLGLKEAKALVDGAPAPIKEGVAKEEAEEMKAKLEEAGASVELK</sequence>
<organism>
    <name type="scientific">Halalkalibacterium halodurans (strain ATCC BAA-125 / DSM 18197 / FERM 7344 / JCM 9153 / C-125)</name>
    <name type="common">Bacillus halodurans</name>
    <dbReference type="NCBI Taxonomy" id="272558"/>
    <lineage>
        <taxon>Bacteria</taxon>
        <taxon>Bacillati</taxon>
        <taxon>Bacillota</taxon>
        <taxon>Bacilli</taxon>
        <taxon>Bacillales</taxon>
        <taxon>Bacillaceae</taxon>
        <taxon>Halalkalibacterium (ex Joshi et al. 2022)</taxon>
    </lineage>
</organism>
<proteinExistence type="inferred from homology"/>
<reference key="1">
    <citation type="journal article" date="2000" name="Nucleic Acids Res.">
        <title>Complete genome sequence of the alkaliphilic bacterium Bacillus halodurans and genomic sequence comparison with Bacillus subtilis.</title>
        <authorList>
            <person name="Takami H."/>
            <person name="Nakasone K."/>
            <person name="Takaki Y."/>
            <person name="Maeno G."/>
            <person name="Sasaki R."/>
            <person name="Masui N."/>
            <person name="Fuji F."/>
            <person name="Hirama C."/>
            <person name="Nakamura Y."/>
            <person name="Ogasawara N."/>
            <person name="Kuhara S."/>
            <person name="Horikoshi K."/>
        </authorList>
    </citation>
    <scope>NUCLEOTIDE SEQUENCE [LARGE SCALE GENOMIC DNA]</scope>
    <source>
        <strain>ATCC BAA-125 / DSM 18197 / FERM 7344 / JCM 9153 / C-125</strain>
    </source>
</reference>
<feature type="chain" id="PRO_0000157503" description="Large ribosomal subunit protein bL12">
    <location>
        <begin position="1"/>
        <end position="121"/>
    </location>
</feature>
<evidence type="ECO:0000255" key="1">
    <source>
        <dbReference type="HAMAP-Rule" id="MF_00368"/>
    </source>
</evidence>
<evidence type="ECO:0000305" key="2"/>
<protein>
    <recommendedName>
        <fullName evidence="1">Large ribosomal subunit protein bL12</fullName>
    </recommendedName>
    <alternativeName>
        <fullName evidence="2">50S ribosomal protein L7/L12</fullName>
    </alternativeName>
</protein>
<accession>Q9KGE3</accession>
<dbReference type="EMBL" id="BA000004">
    <property type="protein sequence ID" value="BAB03841.1"/>
    <property type="molecule type" value="Genomic_DNA"/>
</dbReference>
<dbReference type="PIR" id="B83665">
    <property type="entry name" value="B83665"/>
</dbReference>
<dbReference type="RefSeq" id="WP_010896305.1">
    <property type="nucleotide sequence ID" value="NC_002570.2"/>
</dbReference>
<dbReference type="SMR" id="Q9KGE3"/>
<dbReference type="STRING" id="272558.gene:10725962"/>
<dbReference type="GeneID" id="87595665"/>
<dbReference type="KEGG" id="bha:BH0122"/>
<dbReference type="eggNOG" id="COG0222">
    <property type="taxonomic scope" value="Bacteria"/>
</dbReference>
<dbReference type="HOGENOM" id="CLU_086499_3_2_9"/>
<dbReference type="OrthoDB" id="9811748at2"/>
<dbReference type="Proteomes" id="UP000001258">
    <property type="component" value="Chromosome"/>
</dbReference>
<dbReference type="GO" id="GO:0022625">
    <property type="term" value="C:cytosolic large ribosomal subunit"/>
    <property type="evidence" value="ECO:0007669"/>
    <property type="project" value="TreeGrafter"/>
</dbReference>
<dbReference type="GO" id="GO:0003729">
    <property type="term" value="F:mRNA binding"/>
    <property type="evidence" value="ECO:0007669"/>
    <property type="project" value="TreeGrafter"/>
</dbReference>
<dbReference type="GO" id="GO:0003735">
    <property type="term" value="F:structural constituent of ribosome"/>
    <property type="evidence" value="ECO:0007669"/>
    <property type="project" value="InterPro"/>
</dbReference>
<dbReference type="GO" id="GO:0006412">
    <property type="term" value="P:translation"/>
    <property type="evidence" value="ECO:0007669"/>
    <property type="project" value="UniProtKB-UniRule"/>
</dbReference>
<dbReference type="CDD" id="cd00387">
    <property type="entry name" value="Ribosomal_L7_L12"/>
    <property type="match status" value="1"/>
</dbReference>
<dbReference type="FunFam" id="1.20.5.710:FF:000002">
    <property type="entry name" value="50S ribosomal protein L7/L12"/>
    <property type="match status" value="1"/>
</dbReference>
<dbReference type="FunFam" id="3.30.1390.10:FF:000001">
    <property type="entry name" value="50S ribosomal protein L7/L12"/>
    <property type="match status" value="1"/>
</dbReference>
<dbReference type="Gene3D" id="3.30.1390.10">
    <property type="match status" value="1"/>
</dbReference>
<dbReference type="Gene3D" id="1.20.5.710">
    <property type="entry name" value="Single helix bin"/>
    <property type="match status" value="1"/>
</dbReference>
<dbReference type="HAMAP" id="MF_00368">
    <property type="entry name" value="Ribosomal_bL12"/>
    <property type="match status" value="1"/>
</dbReference>
<dbReference type="InterPro" id="IPR000206">
    <property type="entry name" value="Ribosomal_bL12"/>
</dbReference>
<dbReference type="InterPro" id="IPR013823">
    <property type="entry name" value="Ribosomal_bL12_C"/>
</dbReference>
<dbReference type="InterPro" id="IPR014719">
    <property type="entry name" value="Ribosomal_bL12_C/ClpS-like"/>
</dbReference>
<dbReference type="InterPro" id="IPR008932">
    <property type="entry name" value="Ribosomal_bL12_oligo"/>
</dbReference>
<dbReference type="InterPro" id="IPR036235">
    <property type="entry name" value="Ribosomal_bL12_oligo_N_sf"/>
</dbReference>
<dbReference type="NCBIfam" id="TIGR00855">
    <property type="entry name" value="L12"/>
    <property type="match status" value="1"/>
</dbReference>
<dbReference type="PANTHER" id="PTHR45987">
    <property type="entry name" value="39S RIBOSOMAL PROTEIN L12"/>
    <property type="match status" value="1"/>
</dbReference>
<dbReference type="PANTHER" id="PTHR45987:SF4">
    <property type="entry name" value="LARGE RIBOSOMAL SUBUNIT PROTEIN BL12M"/>
    <property type="match status" value="1"/>
</dbReference>
<dbReference type="Pfam" id="PF00542">
    <property type="entry name" value="Ribosomal_L12"/>
    <property type="match status" value="1"/>
</dbReference>
<dbReference type="Pfam" id="PF16320">
    <property type="entry name" value="Ribosomal_L12_N"/>
    <property type="match status" value="1"/>
</dbReference>
<dbReference type="SUPFAM" id="SSF54736">
    <property type="entry name" value="ClpS-like"/>
    <property type="match status" value="1"/>
</dbReference>
<dbReference type="SUPFAM" id="SSF48300">
    <property type="entry name" value="Ribosomal protein L7/12, oligomerisation (N-terminal) domain"/>
    <property type="match status" value="1"/>
</dbReference>